<proteinExistence type="inferred from homology"/>
<accession>Q2SU36</accession>
<comment type="function">
    <text evidence="1">One of the primary rRNA binding proteins, it binds specifically to the 5'-end of 16S ribosomal RNA.</text>
</comment>
<comment type="subunit">
    <text evidence="1">Part of the 30S ribosomal subunit.</text>
</comment>
<comment type="similarity">
    <text evidence="1">Belongs to the universal ribosomal protein uS17 family.</text>
</comment>
<reference key="1">
    <citation type="journal article" date="2005" name="BMC Genomics">
        <title>Bacterial genome adaptation to niches: divergence of the potential virulence genes in three Burkholderia species of different survival strategies.</title>
        <authorList>
            <person name="Kim H.S."/>
            <person name="Schell M.A."/>
            <person name="Yu Y."/>
            <person name="Ulrich R.L."/>
            <person name="Sarria S.H."/>
            <person name="Nierman W.C."/>
            <person name="DeShazer D."/>
        </authorList>
    </citation>
    <scope>NUCLEOTIDE SEQUENCE [LARGE SCALE GENOMIC DNA]</scope>
    <source>
        <strain>ATCC 700388 / DSM 13276 / CCUG 48851 / CIP 106301 / E264</strain>
    </source>
</reference>
<feature type="chain" id="PRO_0000233449" description="Small ribosomal subunit protein uS17">
    <location>
        <begin position="1"/>
        <end position="90"/>
    </location>
</feature>
<gene>
    <name evidence="1" type="primary">rpsQ</name>
    <name type="ordered locus">BTH_I3059</name>
</gene>
<dbReference type="EMBL" id="CP000086">
    <property type="protein sequence ID" value="ABC38094.1"/>
    <property type="molecule type" value="Genomic_DNA"/>
</dbReference>
<dbReference type="RefSeq" id="WP_009888377.1">
    <property type="nucleotide sequence ID" value="NZ_CP008786.1"/>
</dbReference>
<dbReference type="SMR" id="Q2SU36"/>
<dbReference type="GeneID" id="60548056"/>
<dbReference type="KEGG" id="bte:BTH_I3059"/>
<dbReference type="HOGENOM" id="CLU_073626_1_1_4"/>
<dbReference type="Proteomes" id="UP000001930">
    <property type="component" value="Chromosome I"/>
</dbReference>
<dbReference type="GO" id="GO:0022627">
    <property type="term" value="C:cytosolic small ribosomal subunit"/>
    <property type="evidence" value="ECO:0007669"/>
    <property type="project" value="TreeGrafter"/>
</dbReference>
<dbReference type="GO" id="GO:0019843">
    <property type="term" value="F:rRNA binding"/>
    <property type="evidence" value="ECO:0007669"/>
    <property type="project" value="UniProtKB-UniRule"/>
</dbReference>
<dbReference type="GO" id="GO:0003735">
    <property type="term" value="F:structural constituent of ribosome"/>
    <property type="evidence" value="ECO:0007669"/>
    <property type="project" value="InterPro"/>
</dbReference>
<dbReference type="GO" id="GO:0006412">
    <property type="term" value="P:translation"/>
    <property type="evidence" value="ECO:0007669"/>
    <property type="project" value="UniProtKB-UniRule"/>
</dbReference>
<dbReference type="CDD" id="cd00364">
    <property type="entry name" value="Ribosomal_uS17"/>
    <property type="match status" value="1"/>
</dbReference>
<dbReference type="Gene3D" id="2.40.50.140">
    <property type="entry name" value="Nucleic acid-binding proteins"/>
    <property type="match status" value="1"/>
</dbReference>
<dbReference type="HAMAP" id="MF_01345_B">
    <property type="entry name" value="Ribosomal_uS17_B"/>
    <property type="match status" value="1"/>
</dbReference>
<dbReference type="InterPro" id="IPR012340">
    <property type="entry name" value="NA-bd_OB-fold"/>
</dbReference>
<dbReference type="InterPro" id="IPR000266">
    <property type="entry name" value="Ribosomal_uS17"/>
</dbReference>
<dbReference type="InterPro" id="IPR019984">
    <property type="entry name" value="Ribosomal_uS17_bact/chlr"/>
</dbReference>
<dbReference type="InterPro" id="IPR019979">
    <property type="entry name" value="Ribosomal_uS17_CS"/>
</dbReference>
<dbReference type="NCBIfam" id="NF004123">
    <property type="entry name" value="PRK05610.1"/>
    <property type="match status" value="1"/>
</dbReference>
<dbReference type="NCBIfam" id="TIGR03635">
    <property type="entry name" value="uS17_bact"/>
    <property type="match status" value="1"/>
</dbReference>
<dbReference type="PANTHER" id="PTHR10744">
    <property type="entry name" value="40S RIBOSOMAL PROTEIN S11 FAMILY MEMBER"/>
    <property type="match status" value="1"/>
</dbReference>
<dbReference type="PANTHER" id="PTHR10744:SF1">
    <property type="entry name" value="SMALL RIBOSOMAL SUBUNIT PROTEIN US17M"/>
    <property type="match status" value="1"/>
</dbReference>
<dbReference type="Pfam" id="PF00366">
    <property type="entry name" value="Ribosomal_S17"/>
    <property type="match status" value="1"/>
</dbReference>
<dbReference type="PRINTS" id="PR00973">
    <property type="entry name" value="RIBOSOMALS17"/>
</dbReference>
<dbReference type="SUPFAM" id="SSF50249">
    <property type="entry name" value="Nucleic acid-binding proteins"/>
    <property type="match status" value="1"/>
</dbReference>
<dbReference type="PROSITE" id="PS00056">
    <property type="entry name" value="RIBOSOMAL_S17"/>
    <property type="match status" value="1"/>
</dbReference>
<name>RS17_BURTA</name>
<evidence type="ECO:0000255" key="1">
    <source>
        <dbReference type="HAMAP-Rule" id="MF_01345"/>
    </source>
</evidence>
<evidence type="ECO:0000305" key="2"/>
<keyword id="KW-0687">Ribonucleoprotein</keyword>
<keyword id="KW-0689">Ribosomal protein</keyword>
<keyword id="KW-0694">RNA-binding</keyword>
<keyword id="KW-0699">rRNA-binding</keyword>
<organism>
    <name type="scientific">Burkholderia thailandensis (strain ATCC 700388 / DSM 13276 / CCUG 48851 / CIP 106301 / E264)</name>
    <dbReference type="NCBI Taxonomy" id="271848"/>
    <lineage>
        <taxon>Bacteria</taxon>
        <taxon>Pseudomonadati</taxon>
        <taxon>Pseudomonadota</taxon>
        <taxon>Betaproteobacteria</taxon>
        <taxon>Burkholderiales</taxon>
        <taxon>Burkholderiaceae</taxon>
        <taxon>Burkholderia</taxon>
        <taxon>pseudomallei group</taxon>
    </lineage>
</organism>
<sequence length="90" mass="10279">MNDSVKTSLKRTLVGKVVSNKMDKTVTVLVEHRVKHPIYGKYVVRSKKYHAHDEANTYNEGDLVEIQETRPVSKTKAWTVSRLVEAARVI</sequence>
<protein>
    <recommendedName>
        <fullName evidence="1">Small ribosomal subunit protein uS17</fullName>
    </recommendedName>
    <alternativeName>
        <fullName evidence="2">30S ribosomal protein S17</fullName>
    </alternativeName>
</protein>